<gene>
    <name evidence="1" type="primary">lexA</name>
    <name type="ordered locus">EF_1579</name>
</gene>
<comment type="function">
    <text evidence="1">Represses a number of genes involved in the response to DNA damage (SOS response), including recA and lexA. In the presence of single-stranded DNA, RecA interacts with LexA causing an autocatalytic cleavage which disrupts the DNA-binding part of LexA, leading to derepression of the SOS regulon and eventually DNA repair.</text>
</comment>
<comment type="catalytic activity">
    <reaction evidence="1">
        <text>Hydrolysis of Ala-|-Gly bond in repressor LexA.</text>
        <dbReference type="EC" id="3.4.21.88"/>
    </reaction>
</comment>
<comment type="subunit">
    <text evidence="1">Homodimer.</text>
</comment>
<comment type="similarity">
    <text evidence="1">Belongs to the peptidase S24 family.</text>
</comment>
<accession>Q834R0</accession>
<evidence type="ECO:0000255" key="1">
    <source>
        <dbReference type="HAMAP-Rule" id="MF_00015"/>
    </source>
</evidence>
<protein>
    <recommendedName>
        <fullName evidence="1">LexA repressor</fullName>
        <ecNumber evidence="1">3.4.21.88</ecNumber>
    </recommendedName>
</protein>
<keyword id="KW-0068">Autocatalytic cleavage</keyword>
<keyword id="KW-0227">DNA damage</keyword>
<keyword id="KW-0234">DNA repair</keyword>
<keyword id="KW-0235">DNA replication</keyword>
<keyword id="KW-0238">DNA-binding</keyword>
<keyword id="KW-0378">Hydrolase</keyword>
<keyword id="KW-1185">Reference proteome</keyword>
<keyword id="KW-0678">Repressor</keyword>
<keyword id="KW-0742">SOS response</keyword>
<keyword id="KW-0804">Transcription</keyword>
<keyword id="KW-0805">Transcription regulation</keyword>
<organism>
    <name type="scientific">Enterococcus faecalis (strain ATCC 700802 / V583)</name>
    <dbReference type="NCBI Taxonomy" id="226185"/>
    <lineage>
        <taxon>Bacteria</taxon>
        <taxon>Bacillati</taxon>
        <taxon>Bacillota</taxon>
        <taxon>Bacilli</taxon>
        <taxon>Lactobacillales</taxon>
        <taxon>Enterococcaceae</taxon>
        <taxon>Enterococcus</taxon>
    </lineage>
</organism>
<reference key="1">
    <citation type="journal article" date="2003" name="Science">
        <title>Role of mobile DNA in the evolution of vancomycin-resistant Enterococcus faecalis.</title>
        <authorList>
            <person name="Paulsen I.T."/>
            <person name="Banerjei L."/>
            <person name="Myers G.S.A."/>
            <person name="Nelson K.E."/>
            <person name="Seshadri R."/>
            <person name="Read T.D."/>
            <person name="Fouts D.E."/>
            <person name="Eisen J.A."/>
            <person name="Gill S.R."/>
            <person name="Heidelberg J.F."/>
            <person name="Tettelin H."/>
            <person name="Dodson R.J."/>
            <person name="Umayam L.A."/>
            <person name="Brinkac L.M."/>
            <person name="Beanan M.J."/>
            <person name="Daugherty S.C."/>
            <person name="DeBoy R.T."/>
            <person name="Durkin S.A."/>
            <person name="Kolonay J.F."/>
            <person name="Madupu R."/>
            <person name="Nelson W.C."/>
            <person name="Vamathevan J.J."/>
            <person name="Tran B."/>
            <person name="Upton J."/>
            <person name="Hansen T."/>
            <person name="Shetty J."/>
            <person name="Khouri H.M."/>
            <person name="Utterback T.R."/>
            <person name="Radune D."/>
            <person name="Ketchum K.A."/>
            <person name="Dougherty B.A."/>
            <person name="Fraser C.M."/>
        </authorList>
    </citation>
    <scope>NUCLEOTIDE SEQUENCE [LARGE SCALE GENOMIC DNA]</scope>
    <source>
        <strain>ATCC 700802 / V583</strain>
    </source>
</reference>
<dbReference type="EC" id="3.4.21.88" evidence="1"/>
<dbReference type="EMBL" id="AE016830">
    <property type="protein sequence ID" value="AAO81366.1"/>
    <property type="molecule type" value="Genomic_DNA"/>
</dbReference>
<dbReference type="RefSeq" id="NP_815296.1">
    <property type="nucleotide sequence ID" value="NC_004668.1"/>
</dbReference>
<dbReference type="SMR" id="Q834R0"/>
<dbReference type="STRING" id="226185.EF_1579"/>
<dbReference type="MEROPS" id="S24.001"/>
<dbReference type="EnsemblBacteria" id="AAO81366">
    <property type="protein sequence ID" value="AAO81366"/>
    <property type="gene ID" value="EF_1579"/>
</dbReference>
<dbReference type="KEGG" id="efa:EF1579"/>
<dbReference type="PATRIC" id="fig|226185.9.peg.1483"/>
<dbReference type="eggNOG" id="COG1974">
    <property type="taxonomic scope" value="Bacteria"/>
</dbReference>
<dbReference type="HOGENOM" id="CLU_066192_45_1_9"/>
<dbReference type="Proteomes" id="UP000001415">
    <property type="component" value="Chromosome"/>
</dbReference>
<dbReference type="GO" id="GO:0003677">
    <property type="term" value="F:DNA binding"/>
    <property type="evidence" value="ECO:0007669"/>
    <property type="project" value="UniProtKB-UniRule"/>
</dbReference>
<dbReference type="GO" id="GO:0004252">
    <property type="term" value="F:serine-type endopeptidase activity"/>
    <property type="evidence" value="ECO:0007669"/>
    <property type="project" value="UniProtKB-UniRule"/>
</dbReference>
<dbReference type="GO" id="GO:0006281">
    <property type="term" value="P:DNA repair"/>
    <property type="evidence" value="ECO:0007669"/>
    <property type="project" value="UniProtKB-UniRule"/>
</dbReference>
<dbReference type="GO" id="GO:0006260">
    <property type="term" value="P:DNA replication"/>
    <property type="evidence" value="ECO:0007669"/>
    <property type="project" value="UniProtKB-UniRule"/>
</dbReference>
<dbReference type="GO" id="GO:0045892">
    <property type="term" value="P:negative regulation of DNA-templated transcription"/>
    <property type="evidence" value="ECO:0007669"/>
    <property type="project" value="UniProtKB-UniRule"/>
</dbReference>
<dbReference type="GO" id="GO:0006508">
    <property type="term" value="P:proteolysis"/>
    <property type="evidence" value="ECO:0007669"/>
    <property type="project" value="InterPro"/>
</dbReference>
<dbReference type="GO" id="GO:0009432">
    <property type="term" value="P:SOS response"/>
    <property type="evidence" value="ECO:0007669"/>
    <property type="project" value="UniProtKB-UniRule"/>
</dbReference>
<dbReference type="CDD" id="cd00090">
    <property type="entry name" value="HTH_ARSR"/>
    <property type="match status" value="1"/>
</dbReference>
<dbReference type="CDD" id="cd06529">
    <property type="entry name" value="S24_LexA-like"/>
    <property type="match status" value="1"/>
</dbReference>
<dbReference type="FunFam" id="2.10.109.10:FF:000001">
    <property type="entry name" value="LexA repressor"/>
    <property type="match status" value="1"/>
</dbReference>
<dbReference type="Gene3D" id="2.10.109.10">
    <property type="entry name" value="Umud Fragment, subunit A"/>
    <property type="match status" value="1"/>
</dbReference>
<dbReference type="Gene3D" id="1.10.10.10">
    <property type="entry name" value="Winged helix-like DNA-binding domain superfamily/Winged helix DNA-binding domain"/>
    <property type="match status" value="1"/>
</dbReference>
<dbReference type="HAMAP" id="MF_00015">
    <property type="entry name" value="LexA"/>
    <property type="match status" value="1"/>
</dbReference>
<dbReference type="InterPro" id="IPR011991">
    <property type="entry name" value="ArsR-like_HTH"/>
</dbReference>
<dbReference type="InterPro" id="IPR006200">
    <property type="entry name" value="LexA"/>
</dbReference>
<dbReference type="InterPro" id="IPR039418">
    <property type="entry name" value="LexA-like"/>
</dbReference>
<dbReference type="InterPro" id="IPR036286">
    <property type="entry name" value="LexA/Signal_pep-like_sf"/>
</dbReference>
<dbReference type="InterPro" id="IPR006199">
    <property type="entry name" value="LexA_DNA-bd_dom"/>
</dbReference>
<dbReference type="InterPro" id="IPR050077">
    <property type="entry name" value="LexA_repressor"/>
</dbReference>
<dbReference type="InterPro" id="IPR006197">
    <property type="entry name" value="Peptidase_S24_LexA"/>
</dbReference>
<dbReference type="InterPro" id="IPR015927">
    <property type="entry name" value="Peptidase_S24_S26A/B/C"/>
</dbReference>
<dbReference type="InterPro" id="IPR036388">
    <property type="entry name" value="WH-like_DNA-bd_sf"/>
</dbReference>
<dbReference type="InterPro" id="IPR036390">
    <property type="entry name" value="WH_DNA-bd_sf"/>
</dbReference>
<dbReference type="NCBIfam" id="TIGR00498">
    <property type="entry name" value="lexA"/>
    <property type="match status" value="1"/>
</dbReference>
<dbReference type="PANTHER" id="PTHR33516">
    <property type="entry name" value="LEXA REPRESSOR"/>
    <property type="match status" value="1"/>
</dbReference>
<dbReference type="PANTHER" id="PTHR33516:SF2">
    <property type="entry name" value="LEXA REPRESSOR-RELATED"/>
    <property type="match status" value="1"/>
</dbReference>
<dbReference type="Pfam" id="PF01726">
    <property type="entry name" value="LexA_DNA_bind"/>
    <property type="match status" value="1"/>
</dbReference>
<dbReference type="Pfam" id="PF00717">
    <property type="entry name" value="Peptidase_S24"/>
    <property type="match status" value="1"/>
</dbReference>
<dbReference type="PRINTS" id="PR00726">
    <property type="entry name" value="LEXASERPTASE"/>
</dbReference>
<dbReference type="SUPFAM" id="SSF51306">
    <property type="entry name" value="LexA/Signal peptidase"/>
    <property type="match status" value="1"/>
</dbReference>
<dbReference type="SUPFAM" id="SSF46785">
    <property type="entry name" value="Winged helix' DNA-binding domain"/>
    <property type="match status" value="1"/>
</dbReference>
<name>LEXA_ENTFA</name>
<sequence length="209" mass="23261">MRVLAKRTETRQLEVLKYIYEQVELKGYPPTVREIGKAVDLSSTSTVHGHLARLEKKGLILRDPTKPRAIELTPEGLEKIGIQPTTIPMLGVVTAGEPILAVEEASDFFPLPPDLRTEENALFMLTIRGESMINAGILDGDQVIVRKQSNANNGDIVIAMTDEDEATCKRFFREVDHIRLQPENDALAPILLDNVTILGKVVGLYRNHI</sequence>
<proteinExistence type="inferred from homology"/>
<feature type="chain" id="PRO_0000170034" description="LexA repressor">
    <location>
        <begin position="1"/>
        <end position="209"/>
    </location>
</feature>
<feature type="DNA-binding region" description="H-T-H motif" evidence="1">
    <location>
        <begin position="32"/>
        <end position="52"/>
    </location>
</feature>
<feature type="active site" description="For autocatalytic cleavage activity" evidence="1">
    <location>
        <position position="131"/>
    </location>
</feature>
<feature type="active site" description="For autocatalytic cleavage activity" evidence="1">
    <location>
        <position position="169"/>
    </location>
</feature>
<feature type="site" description="Cleavage; by autolysis" evidence="1">
    <location>
        <begin position="95"/>
        <end position="96"/>
    </location>
</feature>